<accession>P42007</accession>
<sequence>MKPLASLRDIKTRINATKKTSQITKAMEMVSTSKLNRAAKREIVRSYMEKIQEVVANVASRGRSHPMLVSRPVKKTGYLVITSDRGLAGAYNSNVVRLVYPKRSKNAMLPPDEYAIIVIGRVGLSFFRKRNMPVILDITRLPDQPSFADIKEIARKTVGLFADGTFDELYMYYNHYVSAIQQEVTERKLLPLTDFLAENKQRTVYEFEPSQEEILDVLLPQYAESLIYGALLDAKASEHAARMTAMKNATDNANDVIRTLTLSYNRARQAAITQEITEIVAGRNALQ</sequence>
<proteinExistence type="inferred from homology"/>
<feature type="chain" id="PRO_0000073233" description="ATP synthase gamma chain">
    <location>
        <begin position="1"/>
        <end position="287"/>
    </location>
</feature>
<dbReference type="EMBL" id="D38060">
    <property type="protein sequence ID" value="BAA07254.1"/>
    <property type="molecule type" value="Genomic_DNA"/>
</dbReference>
<dbReference type="SMR" id="P42007"/>
<dbReference type="GO" id="GO:0005886">
    <property type="term" value="C:plasma membrane"/>
    <property type="evidence" value="ECO:0007669"/>
    <property type="project" value="UniProtKB-SubCell"/>
</dbReference>
<dbReference type="GO" id="GO:0045259">
    <property type="term" value="C:proton-transporting ATP synthase complex"/>
    <property type="evidence" value="ECO:0007669"/>
    <property type="project" value="UniProtKB-KW"/>
</dbReference>
<dbReference type="GO" id="GO:0005524">
    <property type="term" value="F:ATP binding"/>
    <property type="evidence" value="ECO:0007669"/>
    <property type="project" value="UniProtKB-UniRule"/>
</dbReference>
<dbReference type="GO" id="GO:0046933">
    <property type="term" value="F:proton-transporting ATP synthase activity, rotational mechanism"/>
    <property type="evidence" value="ECO:0007669"/>
    <property type="project" value="UniProtKB-UniRule"/>
</dbReference>
<dbReference type="GO" id="GO:0042777">
    <property type="term" value="P:proton motive force-driven plasma membrane ATP synthesis"/>
    <property type="evidence" value="ECO:0007669"/>
    <property type="project" value="UniProtKB-UniRule"/>
</dbReference>
<dbReference type="CDD" id="cd12151">
    <property type="entry name" value="F1-ATPase_gamma"/>
    <property type="match status" value="1"/>
</dbReference>
<dbReference type="FunFam" id="3.40.1380.10:FF:000002">
    <property type="entry name" value="ATP synthase gamma chain"/>
    <property type="match status" value="1"/>
</dbReference>
<dbReference type="Gene3D" id="3.40.1380.10">
    <property type="match status" value="1"/>
</dbReference>
<dbReference type="Gene3D" id="1.10.287.80">
    <property type="entry name" value="ATP synthase, gamma subunit, helix hairpin domain"/>
    <property type="match status" value="1"/>
</dbReference>
<dbReference type="HAMAP" id="MF_00815">
    <property type="entry name" value="ATP_synth_gamma_bact"/>
    <property type="match status" value="1"/>
</dbReference>
<dbReference type="InterPro" id="IPR035968">
    <property type="entry name" value="ATP_synth_F1_ATPase_gsu"/>
</dbReference>
<dbReference type="InterPro" id="IPR000131">
    <property type="entry name" value="ATP_synth_F1_gsu"/>
</dbReference>
<dbReference type="NCBIfam" id="TIGR01146">
    <property type="entry name" value="ATPsyn_F1gamma"/>
    <property type="match status" value="1"/>
</dbReference>
<dbReference type="PANTHER" id="PTHR11693">
    <property type="entry name" value="ATP SYNTHASE GAMMA CHAIN"/>
    <property type="match status" value="1"/>
</dbReference>
<dbReference type="PANTHER" id="PTHR11693:SF22">
    <property type="entry name" value="ATP SYNTHASE SUBUNIT GAMMA, MITOCHONDRIAL"/>
    <property type="match status" value="1"/>
</dbReference>
<dbReference type="Pfam" id="PF00231">
    <property type="entry name" value="ATP-synt"/>
    <property type="match status" value="1"/>
</dbReference>
<dbReference type="PRINTS" id="PR00126">
    <property type="entry name" value="ATPASEGAMMA"/>
</dbReference>
<dbReference type="SUPFAM" id="SSF52943">
    <property type="entry name" value="ATP synthase (F1-ATPase), gamma subunit"/>
    <property type="match status" value="1"/>
</dbReference>
<protein>
    <recommendedName>
        <fullName evidence="1">ATP synthase gamma chain</fullName>
    </recommendedName>
    <alternativeName>
        <fullName evidence="1">ATP synthase F1 sector gamma subunit</fullName>
    </alternativeName>
    <alternativeName>
        <fullName evidence="1">F-ATPase gamma subunit</fullName>
    </alternativeName>
</protein>
<keyword id="KW-0066">ATP synthesis</keyword>
<keyword id="KW-1003">Cell membrane</keyword>
<keyword id="KW-0139">CF(1)</keyword>
<keyword id="KW-0375">Hydrogen ion transport</keyword>
<keyword id="KW-0406">Ion transport</keyword>
<keyword id="KW-0472">Membrane</keyword>
<keyword id="KW-0813">Transport</keyword>
<organism>
    <name type="scientific">Geobacillus stearothermophilus</name>
    <name type="common">Bacillus stearothermophilus</name>
    <dbReference type="NCBI Taxonomy" id="1422"/>
    <lineage>
        <taxon>Bacteria</taxon>
        <taxon>Bacillati</taxon>
        <taxon>Bacillota</taxon>
        <taxon>Bacilli</taxon>
        <taxon>Bacillales</taxon>
        <taxon>Anoxybacillaceae</taxon>
        <taxon>Geobacillus</taxon>
    </lineage>
</organism>
<evidence type="ECO:0000255" key="1">
    <source>
        <dbReference type="HAMAP-Rule" id="MF_00815"/>
    </source>
</evidence>
<gene>
    <name evidence="1" type="primary">atpG</name>
</gene>
<comment type="function">
    <text evidence="1">Produces ATP from ADP in the presence of a proton gradient across the membrane. The gamma chain is believed to be important in regulating ATPase activity and the flow of protons through the CF(0) complex.</text>
</comment>
<comment type="subunit">
    <text evidence="1">F-type ATPases have 2 components, CF(1) - the catalytic core - and CF(0) - the membrane proton channel. CF(1) has five subunits: alpha(3), beta(3), gamma(1), delta(1), epsilon(1). CF(0) has three main subunits: a, b and c.</text>
</comment>
<comment type="subcellular location">
    <subcellularLocation>
        <location evidence="1">Cell membrane</location>
        <topology evidence="1">Peripheral membrane protein</topology>
    </subcellularLocation>
</comment>
<comment type="similarity">
    <text evidence="1">Belongs to the ATPase gamma chain family.</text>
</comment>
<name>ATPG_GEOSE</name>
<reference key="1">
    <citation type="submission" date="1994-08" db="EMBL/GenBank/DDBJ databases">
        <authorList>
            <person name="Ishizuka M."/>
            <person name="Imai H."/>
        </authorList>
    </citation>
    <scope>NUCLEOTIDE SEQUENCE [GENOMIC DNA]</scope>
</reference>